<evidence type="ECO:0000269" key="1">
    <source>
    </source>
</evidence>
<evidence type="ECO:0000269" key="2">
    <source>
    </source>
</evidence>
<evidence type="ECO:0000269" key="3">
    <source>
    </source>
</evidence>
<evidence type="ECO:0000269" key="4">
    <source>
    </source>
</evidence>
<evidence type="ECO:0000303" key="5">
    <source>
    </source>
</evidence>
<evidence type="ECO:0000303" key="6">
    <source>
    </source>
</evidence>
<evidence type="ECO:0000303" key="7">
    <source>
    </source>
</evidence>
<evidence type="ECO:0000305" key="8"/>
<evidence type="ECO:0000305" key="9">
    <source>
    </source>
</evidence>
<evidence type="ECO:0000305" key="10">
    <source>
    </source>
</evidence>
<evidence type="ECO:0000312" key="11">
    <source>
        <dbReference type="EMBL" id="BAF38859.1"/>
    </source>
</evidence>
<evidence type="ECO:0007744" key="12">
    <source>
        <dbReference type="PDB" id="1R7A"/>
    </source>
</evidence>
<evidence type="ECO:0007744" key="13">
    <source>
        <dbReference type="PDB" id="2GDU"/>
    </source>
</evidence>
<evidence type="ECO:0007744" key="14">
    <source>
        <dbReference type="PDB" id="2GDV"/>
    </source>
</evidence>
<evidence type="ECO:0007744" key="15">
    <source>
        <dbReference type="PDB" id="5C8B"/>
    </source>
</evidence>
<evidence type="ECO:0007829" key="16">
    <source>
        <dbReference type="PDB" id="5MAN"/>
    </source>
</evidence>
<evidence type="ECO:0007829" key="17">
    <source>
        <dbReference type="PDB" id="6FME"/>
    </source>
</evidence>
<comment type="function">
    <text evidence="1 4">Catalyzes the reversible phosphorolysis of sucrose into alpha-D-glucose 1-phosphate (Glc1P) and D-fructose (PubMed:14740189, PubMed:20691225). Is involved in sucrose degradation. Also displays transglucosylation activity in vitro, by transferring the glucosyl moiety of Glc1P to a broad range of monomeric sugars, such as D- and L-arabinose, D- and L-arabitol, and xylitol (PubMed:14740189).</text>
</comment>
<comment type="catalytic activity">
    <reaction evidence="1 4">
        <text>sucrose + phosphate = D-fructose + alpha-D-glucose 1-phosphate</text>
        <dbReference type="Rhea" id="RHEA:24048"/>
        <dbReference type="ChEBI" id="CHEBI:17992"/>
        <dbReference type="ChEBI" id="CHEBI:37721"/>
        <dbReference type="ChEBI" id="CHEBI:43474"/>
        <dbReference type="ChEBI" id="CHEBI:58601"/>
        <dbReference type="EC" id="2.4.1.7"/>
    </reaction>
</comment>
<comment type="biophysicochemical properties">
    <kinetics>
        <KM evidence="4">6.8 mM for sucrose (at 58 degrees Celsius and pH 6.5)</KM>
        <text evidence="4">kcat is 207 sec(-1) for the phosphorolysis of sucrose (at 58 degrees Celsius and pH 6.5).</text>
    </kinetics>
    <phDependence>
        <text evidence="1 4">Optimum pH is 6.0-6.5 for the phosphorolysis of sucrose.</text>
    </phDependence>
    <temperatureDependence>
        <text evidence="1 4">Optimum temperature is 48 degrees Celsius for the phosphorolysis of sucrose (PubMed:14740189). The His-tagged enzyme shows an optimum temperature of 58 degrees Celsius (PubMed:20691225). The immobilization of the enzyme on Sepabeads EC-HFA increases thermostability, and optimum temperature is shifted to 65 degrees Celsius (PubMed:20691225).</text>
    </temperatureDependence>
</comment>
<comment type="subunit">
    <text evidence="1 2">Homodimer.</text>
</comment>
<comment type="similarity">
    <text evidence="8">Belongs to the glycosyl hydrolase 13 family. Sucrose phosphorylase subfamily.</text>
</comment>
<dbReference type="EC" id="2.4.1.7" evidence="1 4"/>
<dbReference type="EMBL" id="AF543301">
    <property type="protein sequence ID" value="AAO33821.1"/>
    <property type="molecule type" value="Genomic_DNA"/>
</dbReference>
<dbReference type="EMBL" id="AP009256">
    <property type="protein sequence ID" value="BAF38859.1"/>
    <property type="molecule type" value="Genomic_DNA"/>
</dbReference>
<dbReference type="RefSeq" id="WP_011742626.1">
    <property type="nucleotide sequence ID" value="NC_008618.1"/>
</dbReference>
<dbReference type="PDB" id="1R7A">
    <property type="method" value="X-ray"/>
    <property type="resolution" value="1.77 A"/>
    <property type="chains" value="A/B=1-504"/>
</dbReference>
<dbReference type="PDB" id="2GDU">
    <property type="method" value="X-ray"/>
    <property type="resolution" value="2.10 A"/>
    <property type="chains" value="A/B=1-504"/>
</dbReference>
<dbReference type="PDB" id="2GDV">
    <property type="method" value="X-ray"/>
    <property type="resolution" value="2.00 A"/>
    <property type="chains" value="A/B=1-504"/>
</dbReference>
<dbReference type="PDB" id="5C8B">
    <property type="method" value="X-ray"/>
    <property type="resolution" value="2.70 A"/>
    <property type="chains" value="B=1-504"/>
</dbReference>
<dbReference type="PDB" id="5M9X">
    <property type="method" value="X-ray"/>
    <property type="resolution" value="2.35 A"/>
    <property type="chains" value="B=1-504"/>
</dbReference>
<dbReference type="PDB" id="5MAN">
    <property type="method" value="X-ray"/>
    <property type="resolution" value="2.04 A"/>
    <property type="chains" value="B=1-504"/>
</dbReference>
<dbReference type="PDB" id="5MB2">
    <property type="method" value="X-ray"/>
    <property type="resolution" value="1.75 A"/>
    <property type="chains" value="B=1-504"/>
</dbReference>
<dbReference type="PDB" id="6FME">
    <property type="method" value="X-ray"/>
    <property type="resolution" value="1.51 A"/>
    <property type="chains" value="A/B=1-504"/>
</dbReference>
<dbReference type="PDBsum" id="1R7A"/>
<dbReference type="PDBsum" id="2GDU"/>
<dbReference type="PDBsum" id="2GDV"/>
<dbReference type="PDBsum" id="5C8B"/>
<dbReference type="PDBsum" id="5M9X"/>
<dbReference type="PDBsum" id="5MAN"/>
<dbReference type="PDBsum" id="5MB2"/>
<dbReference type="PDBsum" id="6FME"/>
<dbReference type="SMR" id="A0ZZH6"/>
<dbReference type="STRING" id="367928.BAD_0078"/>
<dbReference type="CAZy" id="GH13">
    <property type="family name" value="Glycoside Hydrolase Family 13"/>
</dbReference>
<dbReference type="PaxDb" id="1680-BADO_0067"/>
<dbReference type="GeneID" id="4556453"/>
<dbReference type="KEGG" id="bad:BAD_0078"/>
<dbReference type="HOGENOM" id="CLU_021358_1_0_11"/>
<dbReference type="BRENDA" id="2.4.1.7">
    <property type="organism ID" value="842"/>
</dbReference>
<dbReference type="SABIO-RK" id="A0ZZH6"/>
<dbReference type="EvolutionaryTrace" id="A0ZZH6"/>
<dbReference type="Proteomes" id="UP000008702">
    <property type="component" value="Chromosome"/>
</dbReference>
<dbReference type="GO" id="GO:0009018">
    <property type="term" value="F:sucrose phosphorylase activity"/>
    <property type="evidence" value="ECO:0007669"/>
    <property type="project" value="UniProtKB-EC"/>
</dbReference>
<dbReference type="GO" id="GO:0005975">
    <property type="term" value="P:carbohydrate metabolic process"/>
    <property type="evidence" value="ECO:0007669"/>
    <property type="project" value="InterPro"/>
</dbReference>
<dbReference type="CDD" id="cd11355">
    <property type="entry name" value="AmyAc_Sucrose_phosphorylase"/>
    <property type="match status" value="1"/>
</dbReference>
<dbReference type="Gene3D" id="2.20.220.10">
    <property type="entry name" value="alpha-Amylases"/>
    <property type="match status" value="1"/>
</dbReference>
<dbReference type="Gene3D" id="3.20.20.80">
    <property type="entry name" value="Glycosidases"/>
    <property type="match status" value="1"/>
</dbReference>
<dbReference type="Gene3D" id="3.90.400.10">
    <property type="entry name" value="Oligo-1,6-glucosidase, Domain 2"/>
    <property type="match status" value="1"/>
</dbReference>
<dbReference type="InterPro" id="IPR006047">
    <property type="entry name" value="Glyco_hydro_13_cat_dom"/>
</dbReference>
<dbReference type="InterPro" id="IPR017853">
    <property type="entry name" value="Glycoside_hydrolase_SF"/>
</dbReference>
<dbReference type="InterPro" id="IPR045857">
    <property type="entry name" value="O16G_dom_2"/>
</dbReference>
<dbReference type="InterPro" id="IPR015325">
    <property type="entry name" value="Suc_Porlyase_C"/>
</dbReference>
<dbReference type="InterPro" id="IPR016377">
    <property type="entry name" value="Sucrose_GGa_phosphorylase-rel"/>
</dbReference>
<dbReference type="InterPro" id="IPR022527">
    <property type="entry name" value="Sucrose_phospho"/>
</dbReference>
<dbReference type="NCBIfam" id="TIGR03852">
    <property type="entry name" value="sucrose_gtfA"/>
    <property type="match status" value="1"/>
</dbReference>
<dbReference type="PANTHER" id="PTHR38784">
    <property type="entry name" value="SUCROSE PHOSPHORYLASE"/>
    <property type="match status" value="1"/>
</dbReference>
<dbReference type="PANTHER" id="PTHR38784:SF1">
    <property type="entry name" value="SUCROSE PHOSPHORYLASE"/>
    <property type="match status" value="1"/>
</dbReference>
<dbReference type="Pfam" id="PF00128">
    <property type="entry name" value="Alpha-amylase"/>
    <property type="match status" value="1"/>
</dbReference>
<dbReference type="Pfam" id="PF09244">
    <property type="entry name" value="Suc_Porlyase_C"/>
    <property type="match status" value="1"/>
</dbReference>
<dbReference type="PIRSF" id="PIRSF003059">
    <property type="entry name" value="Sucrose_phosphorylase"/>
    <property type="match status" value="1"/>
</dbReference>
<dbReference type="SMART" id="SM00642">
    <property type="entry name" value="Aamy"/>
    <property type="match status" value="1"/>
</dbReference>
<dbReference type="SUPFAM" id="SSF51445">
    <property type="entry name" value="(Trans)glycosidases"/>
    <property type="match status" value="1"/>
</dbReference>
<dbReference type="SUPFAM" id="SSF51011">
    <property type="entry name" value="Glycosyl hydrolase domain"/>
    <property type="match status" value="1"/>
</dbReference>
<accession>A0ZZH6</accession>
<accession>Q84HQ2</accession>
<gene>
    <name evidence="5" type="primary">sucP</name>
    <name evidence="11" type="synonym">spl</name>
    <name evidence="11" type="ordered locus">BAD_0078</name>
</gene>
<keyword id="KW-0002">3D-structure</keyword>
<keyword id="KW-0119">Carbohydrate metabolism</keyword>
<keyword id="KW-0903">Direct protein sequencing</keyword>
<keyword id="KW-0328">Glycosyltransferase</keyword>
<keyword id="KW-1185">Reference proteome</keyword>
<keyword id="KW-0808">Transferase</keyword>
<feature type="chain" id="PRO_0000442435" description="Sucrose phosphorylase">
    <location>
        <begin position="1"/>
        <end position="504"/>
    </location>
</feature>
<feature type="active site" description="Nucleophile" evidence="3 9">
    <location>
        <position position="192"/>
    </location>
</feature>
<feature type="active site" description="Proton donor" evidence="9 10">
    <location>
        <position position="232"/>
    </location>
</feature>
<feature type="binding site" evidence="3 13">
    <location>
        <position position="50"/>
    </location>
    <ligand>
        <name>substrate</name>
    </ligand>
</feature>
<feature type="binding site" evidence="3 13">
    <location>
        <position position="88"/>
    </location>
    <ligand>
        <name>sucrose</name>
        <dbReference type="ChEBI" id="CHEBI:17992"/>
    </ligand>
</feature>
<feature type="binding site" evidence="3 13">
    <location>
        <begin position="190"/>
        <end position="192"/>
    </location>
    <ligand>
        <name>sucrose</name>
        <dbReference type="ChEBI" id="CHEBI:17992"/>
    </ligand>
</feature>
<feature type="binding site" evidence="3 13">
    <location>
        <position position="232"/>
    </location>
    <ligand>
        <name>sucrose</name>
        <dbReference type="ChEBI" id="CHEBI:17992"/>
    </ligand>
</feature>
<feature type="binding site" evidence="3 13">
    <location>
        <begin position="289"/>
        <end position="290"/>
    </location>
    <ligand>
        <name>sucrose</name>
        <dbReference type="ChEBI" id="CHEBI:17992"/>
    </ligand>
</feature>
<feature type="binding site" evidence="3 13">
    <location>
        <begin position="342"/>
        <end position="345"/>
    </location>
    <ligand>
        <name>sucrose</name>
        <dbReference type="ChEBI" id="CHEBI:17992"/>
    </ligand>
</feature>
<feature type="binding site" evidence="3 13">
    <location>
        <position position="399"/>
    </location>
    <ligand>
        <name>sucrose</name>
        <dbReference type="ChEBI" id="CHEBI:17992"/>
    </ligand>
</feature>
<feature type="mutagenesis site" description="Loss of catalytic activity." evidence="3">
    <original>E</original>
    <variation>Q</variation>
    <location>
        <position position="232"/>
    </location>
</feature>
<feature type="mutagenesis site" description="Decreases affinity for sucrose. Highly improves in vitro activity towards aromatic acceptors, allowing efficient glucosylation of resveratrol, (+)-catechin and (-)-epicatechin." evidence="3">
    <original>Q</original>
    <variation>F</variation>
    <location>
        <position position="345"/>
    </location>
</feature>
<feature type="strand" evidence="17">
    <location>
        <begin position="6"/>
        <end position="9"/>
    </location>
</feature>
<feature type="strand" evidence="17">
    <location>
        <begin position="13"/>
        <end position="18"/>
    </location>
</feature>
<feature type="helix" evidence="17">
    <location>
        <begin position="19"/>
        <end position="29"/>
    </location>
</feature>
<feature type="turn" evidence="17">
    <location>
        <begin position="31"/>
        <end position="33"/>
    </location>
</feature>
<feature type="strand" evidence="17">
    <location>
        <begin position="35"/>
        <end position="39"/>
    </location>
</feature>
<feature type="strand" evidence="17">
    <location>
        <begin position="46"/>
        <end position="50"/>
    </location>
</feature>
<feature type="strand" evidence="17">
    <location>
        <begin position="56"/>
        <end position="61"/>
    </location>
</feature>
<feature type="turn" evidence="17">
    <location>
        <begin position="63"/>
        <end position="65"/>
    </location>
</feature>
<feature type="helix" evidence="17">
    <location>
        <begin position="68"/>
        <end position="74"/>
    </location>
</feature>
<feature type="turn" evidence="17">
    <location>
        <begin position="75"/>
        <end position="77"/>
    </location>
</feature>
<feature type="strand" evidence="17">
    <location>
        <begin position="78"/>
        <end position="84"/>
    </location>
</feature>
<feature type="strand" evidence="17">
    <location>
        <begin position="87"/>
        <end position="90"/>
    </location>
</feature>
<feature type="helix" evidence="17">
    <location>
        <begin position="94"/>
        <end position="102"/>
    </location>
</feature>
<feature type="helix" evidence="17">
    <location>
        <begin position="103"/>
        <end position="105"/>
    </location>
</feature>
<feature type="helix" evidence="17">
    <location>
        <begin position="109"/>
        <end position="111"/>
    </location>
</feature>
<feature type="helix" evidence="17">
    <location>
        <begin position="115"/>
        <end position="118"/>
    </location>
</feature>
<feature type="helix" evidence="17">
    <location>
        <begin position="125"/>
        <end position="129"/>
    </location>
</feature>
<feature type="strand" evidence="17">
    <location>
        <begin position="134"/>
        <end position="137"/>
    </location>
</feature>
<feature type="strand" evidence="17">
    <location>
        <begin position="139"/>
        <end position="145"/>
    </location>
</feature>
<feature type="strand" evidence="17">
    <location>
        <begin position="148"/>
        <end position="153"/>
    </location>
</feature>
<feature type="strand" evidence="17">
    <location>
        <begin position="155"/>
        <end position="157"/>
    </location>
</feature>
<feature type="strand" evidence="17">
    <location>
        <begin position="160"/>
        <end position="163"/>
    </location>
</feature>
<feature type="helix" evidence="17">
    <location>
        <begin position="168"/>
        <end position="183"/>
    </location>
</feature>
<feature type="strand" evidence="17">
    <location>
        <begin position="188"/>
        <end position="191"/>
    </location>
</feature>
<feature type="helix" evidence="17">
    <location>
        <begin position="194"/>
        <end position="196"/>
    </location>
</feature>
<feature type="strand" evidence="17">
    <location>
        <begin position="205"/>
        <end position="207"/>
    </location>
</feature>
<feature type="helix" evidence="17">
    <location>
        <begin position="209"/>
        <end position="224"/>
    </location>
</feature>
<feature type="strand" evidence="17">
    <location>
        <begin position="228"/>
        <end position="231"/>
    </location>
</feature>
<feature type="helix" evidence="17">
    <location>
        <begin position="237"/>
        <end position="244"/>
    </location>
</feature>
<feature type="strand" evidence="17">
    <location>
        <begin position="247"/>
        <end position="252"/>
    </location>
</feature>
<feature type="helix" evidence="17">
    <location>
        <begin position="255"/>
        <end position="265"/>
    </location>
</feature>
<feature type="helix" evidence="17">
    <location>
        <begin position="269"/>
        <end position="277"/>
    </location>
</feature>
<feature type="strand" evidence="17">
    <location>
        <begin position="280"/>
        <end position="284"/>
    </location>
</feature>
<feature type="helix" evidence="17">
    <location>
        <begin position="294"/>
        <end position="297"/>
    </location>
</feature>
<feature type="helix" evidence="17">
    <location>
        <begin position="312"/>
        <end position="325"/>
    </location>
</feature>
<feature type="turn" evidence="17">
    <location>
        <begin position="326"/>
        <end position="328"/>
    </location>
</feature>
<feature type="helix" evidence="17">
    <location>
        <begin position="329"/>
        <end position="333"/>
    </location>
</feature>
<feature type="helix" evidence="17">
    <location>
        <begin position="335"/>
        <end position="337"/>
    </location>
</feature>
<feature type="strand" evidence="16">
    <location>
        <begin position="338"/>
        <end position="340"/>
    </location>
</feature>
<feature type="strand" evidence="17">
    <location>
        <begin position="343"/>
        <end position="346"/>
    </location>
</feature>
<feature type="helix" evidence="17">
    <location>
        <begin position="350"/>
        <end position="353"/>
    </location>
</feature>
<feature type="turn" evidence="17">
    <location>
        <begin position="354"/>
        <end position="356"/>
    </location>
</feature>
<feature type="helix" evidence="17">
    <location>
        <begin position="358"/>
        <end position="370"/>
    </location>
</feature>
<feature type="strand" evidence="17">
    <location>
        <begin position="371"/>
        <end position="378"/>
    </location>
</feature>
<feature type="helix" evidence="17">
    <location>
        <begin position="379"/>
        <end position="382"/>
    </location>
</feature>
<feature type="helix" evidence="17">
    <location>
        <begin position="389"/>
        <end position="395"/>
    </location>
</feature>
<feature type="helix" evidence="17">
    <location>
        <begin position="398"/>
        <end position="402"/>
    </location>
</feature>
<feature type="helix" evidence="17">
    <location>
        <begin position="408"/>
        <end position="414"/>
    </location>
</feature>
<feature type="helix" evidence="17">
    <location>
        <begin position="418"/>
        <end position="432"/>
    </location>
</feature>
<feature type="helix" evidence="17">
    <location>
        <begin position="434"/>
        <end position="437"/>
    </location>
</feature>
<feature type="strand" evidence="17">
    <location>
        <begin position="438"/>
        <end position="445"/>
    </location>
</feature>
<feature type="turn" evidence="17">
    <location>
        <begin position="446"/>
        <end position="448"/>
    </location>
</feature>
<feature type="strand" evidence="17">
    <location>
        <begin position="449"/>
        <end position="455"/>
    </location>
</feature>
<feature type="strand" evidence="17">
    <location>
        <begin position="460"/>
        <end position="465"/>
    </location>
</feature>
<feature type="helix" evidence="17">
    <location>
        <begin position="467"/>
        <end position="470"/>
    </location>
</feature>
<feature type="strand" evidence="17">
    <location>
        <begin position="480"/>
        <end position="486"/>
    </location>
</feature>
<feature type="strand" evidence="17">
    <location>
        <begin position="489"/>
        <end position="494"/>
    </location>
</feature>
<feature type="turn" evidence="17">
    <location>
        <begin position="496"/>
        <end position="498"/>
    </location>
</feature>
<sequence>MKNKVQLITYADRLGDGTIKSMTDILRTRFDGVYDGVHILPFFTPFDGADAGFDPIDHTKVDERLGSWDDVAELSKTHNIMVDAIVNHMSWESKQFQDVLAKGEESEYYPMFLTMSSVFPNGATEEDLAGIYRPRPGLPFTHYKFAGKTRLVWVSFTPQQVDIDTDSDKGWEYLMSIFDQMAASHVSYIRLDAVGYGAKEAGTSCFMTPKTFKLISRLREEGVKRGLEILIEVHSYYKKQVEIASKVDRVYDFALPPLLLHALSTGHVEPVAHWTDIRPNNAVTVLDTHDGIGVIDIGSDQLDRSLKGLVPDEDVDNLVNTIHANTHGESQAATGAAASNLDLYQVNSTYYSALGCNDQHYIAARAVQFFLPGVPQVYYVGALAGKNDMELLRKTNNGRDINRHYYSTAEIDENLKRPVVKALNALAKFRNELDAFDGTFSYTTDDDTSISFTWRGETSQATLTFEPKRGLGVDNTTPVAMLEWEDSAGDHRSDDLIANPPVVA</sequence>
<name>SUCP_BIFAA</name>
<reference key="1">
    <citation type="journal article" date="2004" name="Appl. Microbiol. Biotechnol.">
        <title>Physico-chemical and transglucosylation properties of recombinant sucrose phosphorylase from Bifidobacterium adolescentis DSM20083.</title>
        <authorList>
            <person name="van den Broek L.A."/>
            <person name="van Boxtel E.L."/>
            <person name="Kievit R.P."/>
            <person name="Verhoef R."/>
            <person name="Beldman G."/>
            <person name="Voragen A.G."/>
        </authorList>
    </citation>
    <scope>NUCLEOTIDE SEQUENCE [GENOMIC DNA]</scope>
    <scope>PROTEIN SEQUENCE OF 1-15</scope>
    <scope>FUNCTION</scope>
    <scope>CATALYTIC ACTIVITY</scope>
    <scope>BIOPHYSICOCHEMICAL PROPERTIES</scope>
    <scope>SUBSTRATE SPECIFICITY</scope>
    <scope>SUBUNIT</scope>
    <source>
        <strain>ATCC 15703 / DSM 20083 / NCTC 11814 / E194a</strain>
    </source>
</reference>
<reference key="2">
    <citation type="submission" date="2006-12" db="EMBL/GenBank/DDBJ databases">
        <title>Bifidobacterium adolescentis complete genome sequence.</title>
        <authorList>
            <person name="Suzuki T."/>
            <person name="Tsuda Y."/>
            <person name="Kanou N."/>
            <person name="Inoue T."/>
            <person name="Kumazaki K."/>
            <person name="Nagano S."/>
            <person name="Hirai S."/>
            <person name="Tanaka K."/>
            <person name="Watanabe K."/>
        </authorList>
    </citation>
    <scope>NUCLEOTIDE SEQUENCE [LARGE SCALE GENOMIC DNA]</scope>
    <source>
        <strain>ATCC 15703 / DSM 20083 / NCTC 11814 / E194a</strain>
    </source>
</reference>
<reference key="3">
    <citation type="journal article" date="2010" name="J. Biotechnol.">
        <title>Increasing the thermostability of sucrose phosphorylase by multipoint covalent immobilization.</title>
        <authorList>
            <person name="Cerdobbel A."/>
            <person name="Desmet T."/>
            <person name="De Winter K."/>
            <person name="Maertens J."/>
            <person name="Soetaert W."/>
        </authorList>
    </citation>
    <scope>FUNCTION</scope>
    <scope>CATALYTIC ACTIVITY</scope>
    <scope>BIOPHYSICOCHEMICAL PROPERTIES</scope>
</reference>
<reference evidence="12" key="4">
    <citation type="journal article" date="2004" name="Biochemistry">
        <title>Crystal structure of sucrose phosphorylase from Bifidobacterium adolescentis.</title>
        <authorList>
            <person name="Sprogoe D."/>
            <person name="van den Broek L.A."/>
            <person name="Mirza O."/>
            <person name="Kastrup J.S."/>
            <person name="Voragen A.G."/>
            <person name="Gajhede M."/>
            <person name="Skov L.K."/>
        </authorList>
    </citation>
    <scope>X-RAY CRYSTALLOGRAPHY (1.77 ANGSTROMS)</scope>
    <scope>SUBUNIT</scope>
    <scope>REACTION MECHANISM</scope>
    <scope>ACTIVE SITE</scope>
    <source>
        <strain>ATCC 15703 / DSM 20083 / NCTC 11814 / E194a</strain>
    </source>
</reference>
<reference evidence="13 14" key="5">
    <citation type="journal article" date="2006" name="J. Biol. Chem.">
        <title>Structural rearrangements of sucrose phosphorylase from Bifidobacterium adolescentis during sucrose conversion.</title>
        <authorList>
            <person name="Mirza O."/>
            <person name="Skov L.K."/>
            <person name="Sprogoe D."/>
            <person name="van den Broek L.A."/>
            <person name="Beldman G."/>
            <person name="Kastrup J.S."/>
            <person name="Gajhede M."/>
        </authorList>
    </citation>
    <scope>X-RAY CRYSTALLOGRAPHY (2.00 ANGSTROMS) OF WILD-TYPE IN COVALENT COMPLEX WITH BETA-D-GLUCOSE AND MUTANT GLN-232 IN COMPLEX WITH SUCROSE</scope>
    <scope>MUTAGENESIS OF GLU-232</scope>
    <scope>REACTION MECHANISM</scope>
    <scope>ACTIVE SITE</scope>
</reference>
<reference evidence="15" key="6">
    <citation type="journal article" date="2016" name="ChemBioChem">
        <title>Redesign of the active site of sucrose phosphorylase through a clash-induced cascade of loop shifts.</title>
        <authorList>
            <person name="Kraus M."/>
            <person name="Grimm C."/>
            <person name="Seibel J."/>
        </authorList>
    </citation>
    <scope>X-RAY CRYSTALLOGRAPHY (2.70 ANGSTROMS) OF MUTANT PHE-345 IN COMPLEX WITH BETA-D-GLUCOSE</scope>
    <scope>MUTAGENESIS OF GLN-345</scope>
</reference>
<proteinExistence type="evidence at protein level"/>
<protein>
    <recommendedName>
        <fullName evidence="5 6 7">Sucrose phosphorylase</fullName>
        <shortName evidence="6">SP</shortName>
        <shortName evidence="7">SPase</shortName>
        <ecNumber evidence="1 4">2.4.1.7</ecNumber>
    </recommendedName>
</protein>
<organism>
    <name type="scientific">Bifidobacterium adolescentis (strain ATCC 15703 / DSM 20083 / NCTC 11814 / E194a)</name>
    <dbReference type="NCBI Taxonomy" id="367928"/>
    <lineage>
        <taxon>Bacteria</taxon>
        <taxon>Bacillati</taxon>
        <taxon>Actinomycetota</taxon>
        <taxon>Actinomycetes</taxon>
        <taxon>Bifidobacteriales</taxon>
        <taxon>Bifidobacteriaceae</taxon>
        <taxon>Bifidobacterium</taxon>
    </lineage>
</organism>